<protein>
    <recommendedName>
        <fullName>Ferric reduction oxidase 7, chloroplastic</fullName>
        <shortName>AtFRO7</shortName>
        <ecNumber>1.16.1.7</ecNumber>
    </recommendedName>
    <alternativeName>
        <fullName>Ferric-chelate reductase 7</fullName>
    </alternativeName>
</protein>
<feature type="transit peptide" description="Chloroplast" evidence="2">
    <location>
        <begin position="1"/>
        <end position="28"/>
    </location>
</feature>
<feature type="chain" id="PRO_0000413205" description="Ferric reduction oxidase 7, chloroplastic">
    <location>
        <begin position="29"/>
        <end position="747"/>
    </location>
</feature>
<feature type="transmembrane region" description="Helical" evidence="1">
    <location>
        <begin position="37"/>
        <end position="56"/>
    </location>
</feature>
<feature type="transmembrane region" description="Helical" evidence="1">
    <location>
        <begin position="81"/>
        <end position="99"/>
    </location>
</feature>
<feature type="transmembrane region" description="Helical" evidence="1">
    <location>
        <begin position="132"/>
        <end position="155"/>
    </location>
</feature>
<feature type="transmembrane region" description="Helical" evidence="1">
    <location>
        <begin position="222"/>
        <end position="245"/>
    </location>
</feature>
<feature type="transmembrane region" description="Helical" evidence="1">
    <location>
        <begin position="297"/>
        <end position="321"/>
    </location>
</feature>
<feature type="transmembrane region" description="Helical" evidence="1">
    <location>
        <begin position="344"/>
        <end position="364"/>
    </location>
</feature>
<feature type="transmembrane region" description="Helical" evidence="1">
    <location>
        <begin position="574"/>
        <end position="596"/>
    </location>
</feature>
<feature type="transmembrane region" description="Helical" evidence="1">
    <location>
        <begin position="612"/>
        <end position="634"/>
    </location>
</feature>
<feature type="domain" description="Ferric oxidoreductase">
    <location>
        <begin position="187"/>
        <end position="308"/>
    </location>
</feature>
<feature type="domain" description="FAD-binding FR-type" evidence="3">
    <location>
        <begin position="337"/>
        <end position="454"/>
    </location>
</feature>
<feature type="region of interest" description="Disordered" evidence="4">
    <location>
        <begin position="1"/>
        <end position="23"/>
    </location>
</feature>
<feature type="compositionally biased region" description="Low complexity" evidence="4">
    <location>
        <begin position="14"/>
        <end position="23"/>
    </location>
</feature>
<feature type="binding site" description="axial binding residue" evidence="1">
    <location>
        <position position="223"/>
    </location>
    <ligand>
        <name>heme</name>
        <dbReference type="ChEBI" id="CHEBI:30413"/>
    </ligand>
    <ligandPart>
        <name>Fe</name>
        <dbReference type="ChEBI" id="CHEBI:18248"/>
    </ligandPart>
</feature>
<feature type="binding site" description="axial binding residue" evidence="1">
    <location>
        <position position="237"/>
    </location>
    <ligand>
        <name>heme</name>
        <dbReference type="ChEBI" id="CHEBI:30413"/>
    </ligand>
    <ligandPart>
        <name>Fe</name>
        <dbReference type="ChEBI" id="CHEBI:18248"/>
    </ligandPart>
</feature>
<feature type="binding site" description="axial binding residue" evidence="1">
    <location>
        <position position="298"/>
    </location>
    <ligand>
        <name>heme</name>
        <dbReference type="ChEBI" id="CHEBI:30413"/>
    </ligand>
    <ligandPart>
        <name>Fe</name>
        <dbReference type="ChEBI" id="CHEBI:18248"/>
    </ligandPart>
</feature>
<feature type="binding site" description="axial binding residue" evidence="1">
    <location>
        <position position="311"/>
    </location>
    <ligand>
        <name>heme</name>
        <dbReference type="ChEBI" id="CHEBI:30413"/>
    </ligand>
    <ligandPart>
        <name>Fe</name>
        <dbReference type="ChEBI" id="CHEBI:18248"/>
    </ligandPart>
</feature>
<feature type="binding site" evidence="2">
    <location>
        <begin position="386"/>
        <end position="389"/>
    </location>
    <ligand>
        <name>FAD</name>
        <dbReference type="ChEBI" id="CHEBI:57692"/>
    </ligand>
</feature>
<feature type="binding site" evidence="2">
    <location>
        <begin position="446"/>
        <end position="449"/>
    </location>
    <ligand>
        <name>NAD(+)</name>
        <dbReference type="ChEBI" id="CHEBI:57540"/>
    </ligand>
</feature>
<organism>
    <name type="scientific">Arabidopsis thaliana</name>
    <name type="common">Mouse-ear cress</name>
    <dbReference type="NCBI Taxonomy" id="3702"/>
    <lineage>
        <taxon>Eukaryota</taxon>
        <taxon>Viridiplantae</taxon>
        <taxon>Streptophyta</taxon>
        <taxon>Embryophyta</taxon>
        <taxon>Tracheophyta</taxon>
        <taxon>Spermatophyta</taxon>
        <taxon>Magnoliopsida</taxon>
        <taxon>eudicotyledons</taxon>
        <taxon>Gunneridae</taxon>
        <taxon>Pentapetalae</taxon>
        <taxon>rosids</taxon>
        <taxon>malvids</taxon>
        <taxon>Brassicales</taxon>
        <taxon>Brassicaceae</taxon>
        <taxon>Camelineae</taxon>
        <taxon>Arabidopsis</taxon>
    </lineage>
</organism>
<keyword id="KW-0150">Chloroplast</keyword>
<keyword id="KW-0249">Electron transport</keyword>
<keyword id="KW-0274">FAD</keyword>
<keyword id="KW-0285">Flavoprotein</keyword>
<keyword id="KW-0349">Heme</keyword>
<keyword id="KW-0406">Ion transport</keyword>
<keyword id="KW-0408">Iron</keyword>
<keyword id="KW-0472">Membrane</keyword>
<keyword id="KW-0479">Metal-binding</keyword>
<keyword id="KW-0520">NAD</keyword>
<keyword id="KW-0560">Oxidoreductase</keyword>
<keyword id="KW-0934">Plastid</keyword>
<keyword id="KW-1185">Reference proteome</keyword>
<keyword id="KW-0809">Transit peptide</keyword>
<keyword id="KW-0812">Transmembrane</keyword>
<keyword id="KW-1133">Transmembrane helix</keyword>
<keyword id="KW-0813">Transport</keyword>
<accession>Q3KTM0</accession>
<accession>Q9LT99</accession>
<name>FRO7_ARATH</name>
<proteinExistence type="evidence at transcript level"/>
<comment type="function">
    <text evidence="5 8">Ferric chelate reductase involved in iron mobilization from the cytosol into the chloroplast. May participate in the transport of electrons to a Fe(3+) ion via FAD and heme intermediates. Might be involved iron homeostasis in trichomes.</text>
</comment>
<comment type="catalytic activity">
    <reaction>
        <text>2 a Fe(II)-siderophore + NAD(+) + H(+) = 2 a Fe(III)-siderophore + NADH</text>
        <dbReference type="Rhea" id="RHEA:15061"/>
        <dbReference type="Rhea" id="RHEA-COMP:11342"/>
        <dbReference type="Rhea" id="RHEA-COMP:11344"/>
        <dbReference type="ChEBI" id="CHEBI:15378"/>
        <dbReference type="ChEBI" id="CHEBI:29033"/>
        <dbReference type="ChEBI" id="CHEBI:29034"/>
        <dbReference type="ChEBI" id="CHEBI:57540"/>
        <dbReference type="ChEBI" id="CHEBI:57945"/>
        <dbReference type="EC" id="1.16.1.7"/>
    </reaction>
</comment>
<comment type="cofactor">
    <cofactor evidence="9">
        <name>FAD</name>
        <dbReference type="ChEBI" id="CHEBI:57692"/>
    </cofactor>
</comment>
<comment type="subcellular location">
    <subcellularLocation>
        <location evidence="9">Plastid</location>
        <location evidence="9">Chloroplast membrane</location>
        <topology evidence="9">Multi-pass membrane protein</topology>
    </subcellularLocation>
</comment>
<comment type="tissue specificity">
    <text evidence="5 6 8">Expressed in shoots, flowers and siliques. Detected in cotyledons, leaves and trichomes, but not in roots.</text>
</comment>
<comment type="developmental stage">
    <text evidence="7">Expressed during cell or organ differentiation.</text>
</comment>
<comment type="induction">
    <text evidence="6">Up-regulated in shoots by iron deficiency and down-regulated in shoots by copper deficiency.</text>
</comment>
<comment type="disruption phenotype">
    <text evidence="8">No visible phenotype when grown under normal conditions. Reduced photosynthetic electron transport efficiency, chloroplast ferric chelate reductase activity and iron content. Seedling lethal when grown in alkaline soil.</text>
</comment>
<comment type="similarity">
    <text evidence="9">Belongs to the ferric reductase (FRE) family.</text>
</comment>
<comment type="sequence caution" evidence="9">
    <conflict type="erroneous gene model prediction">
        <sequence resource="EMBL-CDS" id="BAA98162"/>
    </conflict>
</comment>
<sequence>MDDHETPLLSKDLSSSSSSSSSSSSVVVSSLKWILKVVMSVIFVTWVVFLMMYPGSLGDQILTNWRAISSNTLFGLTGSMFLIFSGPILVIAILASLYLIISGEETVFTKKKITKFPRFRLWTFPVLVDGPFGVVSAAEFLGIMVFSVFFLWAIYAYTLRNLNVLDYFHVLPNNRSIFLLELTGLRFGMIGLLCMVFLFLPISRGSILLRLIDIPFEHATRYHVWLGHITMTFFSLHGLCYVVGWTIQGQLLELLFEWKATGIAVLPGVISLVAGLLMWVTSLHTVRKNYFELFFYTHQLYIVFVVFLALHVGDYLFSIVAGGIFLFILDRFLRFYQSRRTVDVISAKSLPCGTLELVLSKPPNMRYNALSFIFLQVKELSWLQWHPFSVSSSPLDGNHHVAVLIKVLGGWTAKLRDQLSTLYEAENQDQLISPESYPKITTCVEGPYGHESPYHLAYENLVLVAGGIGITPFFAILSDILHRKRDGKDCLPGKVLVVWAIKNSDELSLLSAIDIPSICHFFSKKLNLEIHIYVTRQSEPCLEDGMVHKVVHPSVKTPWTNGCSMSVLVGTGDNIWSGLYLIISTIGFIAMITLVDIFYINKYNITTWWYKGLLFVVCMVASVLIFGGLVVVFWHRWEHKTGEVEANGNDKVDLNGEETHNPSAAELKGLAIEEDVQNYTTIRYGTRPAFREIFESLNGKWGSVDVGVIVCGPATLQTTVAKEIRSHSIWRSANHPLFHFNSHSFDL</sequence>
<gene>
    <name type="primary">FRO7</name>
    <name type="ordered locus">At5g49740</name>
    <name type="ORF">K2I5.10</name>
</gene>
<evidence type="ECO:0000250" key="1"/>
<evidence type="ECO:0000255" key="2"/>
<evidence type="ECO:0000255" key="3">
    <source>
        <dbReference type="PROSITE-ProRule" id="PRU00716"/>
    </source>
</evidence>
<evidence type="ECO:0000256" key="4">
    <source>
        <dbReference type="SAM" id="MobiDB-lite"/>
    </source>
</evidence>
<evidence type="ECO:0000269" key="5">
    <source>
    </source>
</evidence>
<evidence type="ECO:0000269" key="6">
    <source>
    </source>
</evidence>
<evidence type="ECO:0000269" key="7">
    <source>
    </source>
</evidence>
<evidence type="ECO:0000269" key="8">
    <source>
    </source>
</evidence>
<evidence type="ECO:0000305" key="9"/>
<reference key="1">
    <citation type="journal article" date="2005" name="Plant Cell Physiol.">
        <title>Molecular and biochemical characterization of the Fe(III) chelate reductase gene family in Arabidopsis thaliana.</title>
        <authorList>
            <person name="Wu H."/>
            <person name="Li L."/>
            <person name="Du J."/>
            <person name="Yuan Y."/>
            <person name="Cheng X."/>
            <person name="Ling H.Q."/>
        </authorList>
    </citation>
    <scope>NUCLEOTIDE SEQUENCE [MRNA]</scope>
    <scope>FUNCTION</scope>
    <scope>TISSUE SPECIFICITY</scope>
</reference>
<reference key="2">
    <citation type="submission" date="1999-04" db="EMBL/GenBank/DDBJ databases">
        <title>Structural analysis of Arabidopsis thaliana chromosome 5. XI.</title>
        <authorList>
            <person name="Kaneko T."/>
            <person name="Katoh T."/>
            <person name="Asamizu E."/>
            <person name="Sato S."/>
            <person name="Nakamura Y."/>
            <person name="Kotani H."/>
            <person name="Tabata S."/>
        </authorList>
    </citation>
    <scope>NUCLEOTIDE SEQUENCE [LARGE SCALE GENOMIC DNA]</scope>
    <source>
        <strain>cv. Columbia</strain>
    </source>
</reference>
<reference key="3">
    <citation type="journal article" date="2017" name="Plant J.">
        <title>Araport11: a complete reannotation of the Arabidopsis thaliana reference genome.</title>
        <authorList>
            <person name="Cheng C.Y."/>
            <person name="Krishnakumar V."/>
            <person name="Chan A.P."/>
            <person name="Thibaud-Nissen F."/>
            <person name="Schobel S."/>
            <person name="Town C.D."/>
        </authorList>
    </citation>
    <scope>GENOME REANNOTATION</scope>
    <source>
        <strain>cv. Columbia</strain>
    </source>
</reference>
<reference key="4">
    <citation type="submission" date="2006-07" db="EMBL/GenBank/DDBJ databases">
        <title>Large-scale analysis of RIKEN Arabidopsis full-length (RAFL) cDNAs.</title>
        <authorList>
            <person name="Totoki Y."/>
            <person name="Seki M."/>
            <person name="Ishida J."/>
            <person name="Nakajima M."/>
            <person name="Enju A."/>
            <person name="Kamiya A."/>
            <person name="Narusaka M."/>
            <person name="Shin-i T."/>
            <person name="Nakagawa M."/>
            <person name="Sakamoto N."/>
            <person name="Oishi K."/>
            <person name="Kohara Y."/>
            <person name="Kobayashi M."/>
            <person name="Toyoda A."/>
            <person name="Sakaki Y."/>
            <person name="Sakurai T."/>
            <person name="Iida K."/>
            <person name="Akiyama K."/>
            <person name="Satou M."/>
            <person name="Toyoda T."/>
            <person name="Konagaya A."/>
            <person name="Carninci P."/>
            <person name="Kawai J."/>
            <person name="Hayashizaki Y."/>
            <person name="Shinozaki K."/>
        </authorList>
    </citation>
    <scope>NUCLEOTIDE SEQUENCE [LARGE SCALE MRNA]</scope>
    <source>
        <strain>cv. Columbia</strain>
    </source>
</reference>
<reference key="5">
    <citation type="journal article" date="2006" name="Planta">
        <title>Expression profiling of the Arabidopsis ferric chelate reductase (FRO) gene family reveals differential regulation by iron and copper.</title>
        <authorList>
            <person name="Mukherjee I."/>
            <person name="Campbell N.H."/>
            <person name="Ash J.S."/>
            <person name="Connolly E.L."/>
        </authorList>
    </citation>
    <scope>TISSUE SPECIFICITY</scope>
    <scope>INDUCTION BY IRON AND COPPER</scope>
</reference>
<reference key="6">
    <citation type="journal article" date="2006" name="Plant Physiol.">
        <title>Light-regulated, tissue-specific, and cell differentiation-specific expression of the Arabidopsis Fe(III)-chelate reductase gene AtFRO6.</title>
        <authorList>
            <person name="Feng H."/>
            <person name="An F."/>
            <person name="Zhang S."/>
            <person name="Ji Z."/>
            <person name="Ling H.Q."/>
            <person name="Zuo J."/>
        </authorList>
    </citation>
    <scope>DEVELOPMENTAL STAGE</scope>
</reference>
<reference key="7">
    <citation type="journal article" date="2008" name="Proc. Natl. Acad. Sci. U.S.A.">
        <title>Chloroplast Fe(III) chelate reductase activity is essential for seedling viability under iron limiting conditions.</title>
        <authorList>
            <person name="Jeong J."/>
            <person name="Cohu C."/>
            <person name="Kerkeb L."/>
            <person name="Pilon M."/>
            <person name="Connolly E.L."/>
            <person name="Guerinot M.L."/>
        </authorList>
    </citation>
    <scope>FUNCTION</scope>
    <scope>SUBCELLULAR LOCATION</scope>
    <scope>TISSUE SPECIFICITY</scope>
    <scope>DISRUPTION PHENOTYPE</scope>
</reference>
<reference key="8">
    <citation type="journal article" date="2009" name="Plant Sci.">
        <title>Iron uptake mechanisms in plants: Functions of the FRO family of ferric reductases.</title>
        <authorList>
            <person name="Jeong J."/>
            <person name="Connolly E.L."/>
        </authorList>
    </citation>
    <scope>GENE FAMILY</scope>
    <scope>NOMENCLATURE</scope>
</reference>
<dbReference type="EC" id="1.16.1.7"/>
<dbReference type="EMBL" id="AY912280">
    <property type="protein sequence ID" value="AAX92640.1"/>
    <property type="molecule type" value="mRNA"/>
</dbReference>
<dbReference type="EMBL" id="AB025613">
    <property type="protein sequence ID" value="BAA98162.1"/>
    <property type="status" value="ALT_SEQ"/>
    <property type="molecule type" value="Genomic_DNA"/>
</dbReference>
<dbReference type="EMBL" id="CP002688">
    <property type="protein sequence ID" value="AED95852.1"/>
    <property type="molecule type" value="Genomic_DNA"/>
</dbReference>
<dbReference type="EMBL" id="AK227087">
    <property type="protein sequence ID" value="BAE99139.1"/>
    <property type="molecule type" value="mRNA"/>
</dbReference>
<dbReference type="RefSeq" id="NP_199785.2">
    <property type="nucleotide sequence ID" value="NM_124352.4"/>
</dbReference>
<dbReference type="SMR" id="Q3KTM0"/>
<dbReference type="FunCoup" id="Q3KTM0">
    <property type="interactions" value="259"/>
</dbReference>
<dbReference type="STRING" id="3702.Q3KTM0"/>
<dbReference type="PaxDb" id="3702-AT5G49740.1"/>
<dbReference type="ProteomicsDB" id="230549"/>
<dbReference type="EnsemblPlants" id="AT5G49740.1">
    <property type="protein sequence ID" value="AT5G49740.1"/>
    <property type="gene ID" value="AT5G49740"/>
</dbReference>
<dbReference type="GeneID" id="835037"/>
<dbReference type="Gramene" id="AT5G49740.1">
    <property type="protein sequence ID" value="AT5G49740.1"/>
    <property type="gene ID" value="AT5G49740"/>
</dbReference>
<dbReference type="KEGG" id="ath:AT5G49740"/>
<dbReference type="Araport" id="AT5G49740"/>
<dbReference type="TAIR" id="AT5G49740">
    <property type="gene designation" value="FRO7"/>
</dbReference>
<dbReference type="eggNOG" id="KOG0039">
    <property type="taxonomic scope" value="Eukaryota"/>
</dbReference>
<dbReference type="HOGENOM" id="CLU_014777_0_0_1"/>
<dbReference type="InParanoid" id="Q3KTM0"/>
<dbReference type="PhylomeDB" id="Q3KTM0"/>
<dbReference type="BioCyc" id="ARA:AT5G49740-MONOMER"/>
<dbReference type="BioCyc" id="MetaCyc:AT5G49740-MONOMER"/>
<dbReference type="BRENDA" id="1.16.1.7">
    <property type="organism ID" value="399"/>
</dbReference>
<dbReference type="PRO" id="PR:Q3KTM0"/>
<dbReference type="Proteomes" id="UP000006548">
    <property type="component" value="Chromosome 5"/>
</dbReference>
<dbReference type="ExpressionAtlas" id="Q3KTM0">
    <property type="expression patterns" value="baseline and differential"/>
</dbReference>
<dbReference type="GO" id="GO:0009507">
    <property type="term" value="C:chloroplast"/>
    <property type="evidence" value="ECO:0000314"/>
    <property type="project" value="TAIR"/>
</dbReference>
<dbReference type="GO" id="GO:0031969">
    <property type="term" value="C:chloroplast membrane"/>
    <property type="evidence" value="ECO:0007669"/>
    <property type="project" value="UniProtKB-SubCell"/>
</dbReference>
<dbReference type="GO" id="GO:0009536">
    <property type="term" value="C:plastid"/>
    <property type="evidence" value="ECO:0007005"/>
    <property type="project" value="TAIR"/>
</dbReference>
<dbReference type="GO" id="GO:0140618">
    <property type="term" value="F:ferric-chelate reductase (NADH) activity"/>
    <property type="evidence" value="ECO:0007669"/>
    <property type="project" value="UniProtKB-EC"/>
</dbReference>
<dbReference type="GO" id="GO:0000293">
    <property type="term" value="F:ferric-chelate reductase activity"/>
    <property type="evidence" value="ECO:0000314"/>
    <property type="project" value="TAIR"/>
</dbReference>
<dbReference type="GO" id="GO:0046872">
    <property type="term" value="F:metal ion binding"/>
    <property type="evidence" value="ECO:0007669"/>
    <property type="project" value="UniProtKB-KW"/>
</dbReference>
<dbReference type="GO" id="GO:0006811">
    <property type="term" value="P:monoatomic ion transport"/>
    <property type="evidence" value="ECO:0007669"/>
    <property type="project" value="UniProtKB-KW"/>
</dbReference>
<dbReference type="GO" id="GO:0009767">
    <property type="term" value="P:photosynthetic electron transport chain"/>
    <property type="evidence" value="ECO:0000315"/>
    <property type="project" value="TAIR"/>
</dbReference>
<dbReference type="CDD" id="cd06186">
    <property type="entry name" value="NOX_Duox_like_FAD_NADP"/>
    <property type="match status" value="1"/>
</dbReference>
<dbReference type="FunFam" id="3.40.50.80:FF:000036">
    <property type="entry name" value="Ferric reduction oxidase 6"/>
    <property type="match status" value="1"/>
</dbReference>
<dbReference type="Gene3D" id="3.40.50.80">
    <property type="entry name" value="Nucleotide-binding domain of ferredoxin-NADP reductase (FNR) module"/>
    <property type="match status" value="2"/>
</dbReference>
<dbReference type="InterPro" id="IPR000778">
    <property type="entry name" value="Cyt_b245_heavy_chain"/>
</dbReference>
<dbReference type="InterPro" id="IPR013112">
    <property type="entry name" value="FAD-bd_8"/>
</dbReference>
<dbReference type="InterPro" id="IPR017927">
    <property type="entry name" value="FAD-bd_FR_type"/>
</dbReference>
<dbReference type="InterPro" id="IPR013130">
    <property type="entry name" value="Fe3_Rdtase_TM_dom"/>
</dbReference>
<dbReference type="InterPro" id="IPR013121">
    <property type="entry name" value="Fe_red_NAD-bd_6"/>
</dbReference>
<dbReference type="InterPro" id="IPR039261">
    <property type="entry name" value="FNR_nucleotide-bd"/>
</dbReference>
<dbReference type="InterPro" id="IPR050369">
    <property type="entry name" value="RBOH/FRE"/>
</dbReference>
<dbReference type="InterPro" id="IPR017938">
    <property type="entry name" value="Riboflavin_synthase-like_b-brl"/>
</dbReference>
<dbReference type="PANTHER" id="PTHR11972:SF69">
    <property type="entry name" value="FERRIC REDUCTION OXIDASE 6-RELATED"/>
    <property type="match status" value="1"/>
</dbReference>
<dbReference type="PANTHER" id="PTHR11972">
    <property type="entry name" value="NADPH OXIDASE"/>
    <property type="match status" value="1"/>
</dbReference>
<dbReference type="Pfam" id="PF08022">
    <property type="entry name" value="FAD_binding_8"/>
    <property type="match status" value="1"/>
</dbReference>
<dbReference type="Pfam" id="PF01794">
    <property type="entry name" value="Ferric_reduct"/>
    <property type="match status" value="1"/>
</dbReference>
<dbReference type="Pfam" id="PF08030">
    <property type="entry name" value="NAD_binding_6"/>
    <property type="match status" value="1"/>
</dbReference>
<dbReference type="PRINTS" id="PR00466">
    <property type="entry name" value="GP91PHOX"/>
</dbReference>
<dbReference type="SFLD" id="SFLDS00052">
    <property type="entry name" value="Ferric_Reductase_Domain"/>
    <property type="match status" value="1"/>
</dbReference>
<dbReference type="SFLD" id="SFLDG01168">
    <property type="entry name" value="Ferric_reductase_subgroup_(FRE"/>
    <property type="match status" value="1"/>
</dbReference>
<dbReference type="SUPFAM" id="SSF52343">
    <property type="entry name" value="Ferredoxin reductase-like, C-terminal NADP-linked domain"/>
    <property type="match status" value="1"/>
</dbReference>
<dbReference type="SUPFAM" id="SSF63380">
    <property type="entry name" value="Riboflavin synthase domain-like"/>
    <property type="match status" value="1"/>
</dbReference>
<dbReference type="PROSITE" id="PS51384">
    <property type="entry name" value="FAD_FR"/>
    <property type="match status" value="1"/>
</dbReference>